<protein>
    <recommendedName>
        <fullName>Cytochrome c</fullName>
    </recommendedName>
</protein>
<name>CYC_ALLMI</name>
<reference key="1">
    <citation type="journal article" date="1993" name="Arch. Biochem. Biophys.">
        <title>Purification and properties of Alligator mississipiensis cytochrome c.</title>
        <authorList>
            <person name="Barber M.J."/>
            <person name="Trimboli A.J."/>
            <person name="Clark M."/>
            <person name="Young C."/>
            <person name="Neame P.J."/>
        </authorList>
    </citation>
    <scope>PROTEIN SEQUENCE OF 2-105</scope>
    <scope>ACETYLATION AT GLY-2</scope>
    <source>
        <tissue>Liver</tissue>
    </source>
</reference>
<evidence type="ECO:0000269" key="1">
    <source>
    </source>
</evidence>
<evidence type="ECO:0000305" key="2"/>
<proteinExistence type="evidence at protein level"/>
<feature type="initiator methionine" description="Removed" evidence="1">
    <location>
        <position position="1"/>
    </location>
</feature>
<feature type="chain" id="PRO_0000108244" description="Cytochrome c">
    <location>
        <begin position="2"/>
        <end position="105"/>
    </location>
</feature>
<feature type="binding site" description="covalent">
    <location>
        <position position="15"/>
    </location>
    <ligand>
        <name>heme c</name>
        <dbReference type="ChEBI" id="CHEBI:61717"/>
    </ligand>
</feature>
<feature type="binding site" description="covalent">
    <location>
        <position position="18"/>
    </location>
    <ligand>
        <name>heme c</name>
        <dbReference type="ChEBI" id="CHEBI:61717"/>
    </ligand>
</feature>
<feature type="binding site" description="axial binding residue">
    <location>
        <position position="19"/>
    </location>
    <ligand>
        <name>heme c</name>
        <dbReference type="ChEBI" id="CHEBI:61717"/>
    </ligand>
    <ligandPart>
        <name>Fe</name>
        <dbReference type="ChEBI" id="CHEBI:18248"/>
    </ligandPart>
</feature>
<feature type="binding site" description="axial binding residue">
    <location>
        <position position="81"/>
    </location>
    <ligand>
        <name>heme c</name>
        <dbReference type="ChEBI" id="CHEBI:61717"/>
    </ligand>
    <ligandPart>
        <name>Fe</name>
        <dbReference type="ChEBI" id="CHEBI:18248"/>
    </ligandPart>
</feature>
<feature type="modified residue" description="N-acetylglycine" evidence="1">
    <location>
        <position position="2"/>
    </location>
</feature>
<keyword id="KW-0007">Acetylation</keyword>
<keyword id="KW-0903">Direct protein sequencing</keyword>
<keyword id="KW-0249">Electron transport</keyword>
<keyword id="KW-0349">Heme</keyword>
<keyword id="KW-0408">Iron</keyword>
<keyword id="KW-0479">Metal-binding</keyword>
<keyword id="KW-0496">Mitochondrion</keyword>
<keyword id="KW-0679">Respiratory chain</keyword>
<keyword id="KW-0813">Transport</keyword>
<organism>
    <name type="scientific">Alligator mississippiensis</name>
    <name type="common">American alligator</name>
    <dbReference type="NCBI Taxonomy" id="8496"/>
    <lineage>
        <taxon>Eukaryota</taxon>
        <taxon>Metazoa</taxon>
        <taxon>Chordata</taxon>
        <taxon>Craniata</taxon>
        <taxon>Vertebrata</taxon>
        <taxon>Euteleostomi</taxon>
        <taxon>Archelosauria</taxon>
        <taxon>Archosauria</taxon>
        <taxon>Crocodylia</taxon>
        <taxon>Alligatoridae</taxon>
        <taxon>Alligatorinae</taxon>
        <taxon>Alligator</taxon>
    </lineage>
</organism>
<sequence>MGDVEKGKKIFVQKCAQCHTVEKGGKHKTGPNLHGLIGRKTGQAPGFSYTEANKNKGITWGEETLMEYLENPKKYIPGTKMIFAGIKKKPERADLIAYLKEATSN</sequence>
<comment type="function">
    <text>Electron carrier protein. The oxidized form of the cytochrome c heme group can accept an electron from the heme group of the cytochrome c1 subunit of cytochrome reductase. Cytochrome c then transfers this electron to the cytochrome oxidase complex, the final protein carrier in the mitochondrial electron-transport chain.</text>
</comment>
<comment type="subcellular location">
    <subcellularLocation>
        <location>Mitochondrion intermembrane space</location>
    </subcellularLocation>
    <text>Loosely associated with the inner membrane.</text>
</comment>
<comment type="PTM">
    <text>Binds 1 heme c group covalently per subunit.</text>
</comment>
<comment type="similarity">
    <text evidence="2">Belongs to the cytochrome c family.</text>
</comment>
<comment type="online information" name="Protein Spotlight">
    <link uri="https://www.proteinspotlight.org/back_issues/076"/>
    <text>Life shuttle - Issue 76 of November 2006</text>
</comment>
<dbReference type="PIR" id="S30377">
    <property type="entry name" value="S30377"/>
</dbReference>
<dbReference type="SMR" id="P81280"/>
<dbReference type="iPTMnet" id="P81280"/>
<dbReference type="eggNOG" id="KOG3453">
    <property type="taxonomic scope" value="Eukaryota"/>
</dbReference>
<dbReference type="GO" id="GO:0005758">
    <property type="term" value="C:mitochondrial intermembrane space"/>
    <property type="evidence" value="ECO:0007669"/>
    <property type="project" value="UniProtKB-SubCell"/>
</dbReference>
<dbReference type="GO" id="GO:0009055">
    <property type="term" value="F:electron transfer activity"/>
    <property type="evidence" value="ECO:0007669"/>
    <property type="project" value="InterPro"/>
</dbReference>
<dbReference type="GO" id="GO:0020037">
    <property type="term" value="F:heme binding"/>
    <property type="evidence" value="ECO:0007669"/>
    <property type="project" value="InterPro"/>
</dbReference>
<dbReference type="GO" id="GO:0046872">
    <property type="term" value="F:metal ion binding"/>
    <property type="evidence" value="ECO:0007669"/>
    <property type="project" value="UniProtKB-KW"/>
</dbReference>
<dbReference type="FunFam" id="1.10.760.10:FF:000008">
    <property type="entry name" value="Cytochrome c"/>
    <property type="match status" value="1"/>
</dbReference>
<dbReference type="Gene3D" id="1.10.760.10">
    <property type="entry name" value="Cytochrome c-like domain"/>
    <property type="match status" value="1"/>
</dbReference>
<dbReference type="InterPro" id="IPR009056">
    <property type="entry name" value="Cyt_c-like_dom"/>
</dbReference>
<dbReference type="InterPro" id="IPR036909">
    <property type="entry name" value="Cyt_c-like_dom_sf"/>
</dbReference>
<dbReference type="InterPro" id="IPR002327">
    <property type="entry name" value="Cyt_c_1A/1B"/>
</dbReference>
<dbReference type="PANTHER" id="PTHR11961">
    <property type="entry name" value="CYTOCHROME C"/>
    <property type="match status" value="1"/>
</dbReference>
<dbReference type="Pfam" id="PF00034">
    <property type="entry name" value="Cytochrom_C"/>
    <property type="match status" value="1"/>
</dbReference>
<dbReference type="PRINTS" id="PR00604">
    <property type="entry name" value="CYTCHRMECIAB"/>
</dbReference>
<dbReference type="SUPFAM" id="SSF46626">
    <property type="entry name" value="Cytochrome c"/>
    <property type="match status" value="1"/>
</dbReference>
<dbReference type="PROSITE" id="PS51007">
    <property type="entry name" value="CYTC"/>
    <property type="match status" value="1"/>
</dbReference>
<accession>P81280</accession>